<sequence>MESQQLHQNPHSLHGSAYASVTSKEVPSNQDPLAVSASNLPEFDRDSTKVNSQQETTPGTSAVPENHHHVSPQPASVPPPQNGQYQQHGMMTPNKAMASNWAHYQQPSMMTCSHYQTSPAYYQPDPHYPLPQYIPPLSTSSPDPIDSQNQHSEVPQAETKVRNNVLPPHTLTSEENFSTWVKFYIRFLKNSNLGDIIPNDQGEIKSQMTYEEHAYIYNTFQAFAPFHLLPTWVKQILEINYADILTVLCKSVSKMQTNNQELKDWIALANLEYDGSTSADTFEITVSTIIQRLKENNINVSDRLACQLILKGLSGDFKYLRNQYRTKTNMKLSQLFAEIQLIYDENKIMNLNKPSQYKQHSEYKNVSRTSPNTTNTKVTTRNYHRTNSSKPRAAKAHNIATSSKFSRVNNDHINESTVSSQYLSDDNELSLRPATERI</sequence>
<protein>
    <recommendedName>
        <fullName>Transposon Ty2-F Gag polyprotein</fullName>
        <shortName>TY2A</shortName>
        <shortName>TYA</shortName>
        <shortName>Transposon Ty2 protein A</shortName>
    </recommendedName>
    <component>
        <recommendedName>
            <fullName>Capsid protein</fullName>
            <shortName>CA</shortName>
        </recommendedName>
    </component>
    <component>
        <recommendedName>
            <fullName>Gag-p4</fullName>
        </recommendedName>
    </component>
</protein>
<comment type="function">
    <text evidence="1">Capsid protein (CA) is the structural component of the virus-like particle (VLP), forming the shell that encapsulates the retrotransposons dimeric RNA genome. The particles are assembled from trimer-clustered units and there are holes in the capsid shells that allow for the diffusion of macromolecules. CA also has nucleocapsid-like chaperone activity, promoting primer tRNA(i)-Met annealing to the multipartite primer-binding site (PBS), dimerization of Ty2 RNA and initiation of reverse transcription (By similarity).</text>
</comment>
<comment type="subunit">
    <text evidence="1">Homotrimer.</text>
</comment>
<comment type="subcellular location">
    <subcellularLocation>
        <location evidence="1">Cytoplasm</location>
    </subcellularLocation>
</comment>
<comment type="alternative products">
    <event type="ribosomal frameshifting"/>
    <isoform>
        <id>P0CX61-1</id>
        <name>Transposon Ty2-F Gag polyprotein</name>
        <sequence type="displayed"/>
    </isoform>
    <isoform>
        <id>P0CX63-1</id>
        <name>Transposon Ty2-F Gag-Pol polyprotein</name>
        <sequence type="external"/>
    </isoform>
    <text>The Gag-Pol polyprotein is generated by a +1 ribosomal frameshift.</text>
</comment>
<comment type="domain">
    <text evidence="1">The C-terminal RNA-binding region of CA is sufficient for all its nucleocapsid-like chaperone activities.</text>
</comment>
<comment type="miscellaneous">
    <text>Retrotransposons are mobile genetic entities that are able to replicate via an RNA intermediate and a reverse transcription step. In contrast to retroviruses, retrotransposons are non-infectious, lack an envelope and remain intracellular. Ty2 retrotransposons belong to the copia elements (pseudoviridae).</text>
</comment>
<comment type="miscellaneous">
    <molecule>Isoform Transposon Ty2-F Gag polyprotein</molecule>
    <text>Produced by conventional translation.</text>
</comment>
<feature type="chain" id="PRO_0000279313" description="Transposon Ty2-F Gag polyprotein">
    <location>
        <begin position="1"/>
        <end position="438"/>
    </location>
</feature>
<feature type="chain" id="PRO_0000279314" description="Capsid protein" evidence="1">
    <location>
        <begin position="1"/>
        <end position="397"/>
    </location>
</feature>
<feature type="peptide" id="PRO_0000279315" description="Gag-p4" evidence="1">
    <location>
        <begin position="398"/>
        <end position="438"/>
    </location>
</feature>
<feature type="region of interest" description="Disordered" evidence="2">
    <location>
        <begin position="1"/>
        <end position="86"/>
    </location>
</feature>
<feature type="region of interest" description="RNA-binding" evidence="1">
    <location>
        <begin position="295"/>
        <end position="397"/>
    </location>
</feature>
<feature type="region of interest" description="Disordered" evidence="2">
    <location>
        <begin position="366"/>
        <end position="397"/>
    </location>
</feature>
<feature type="region of interest" description="Disordered" evidence="2">
    <location>
        <begin position="419"/>
        <end position="438"/>
    </location>
</feature>
<feature type="compositionally biased region" description="Polar residues" evidence="2">
    <location>
        <begin position="1"/>
        <end position="11"/>
    </location>
</feature>
<feature type="compositionally biased region" description="Polar residues" evidence="2">
    <location>
        <begin position="19"/>
        <end position="39"/>
    </location>
</feature>
<feature type="compositionally biased region" description="Polar residues" evidence="2">
    <location>
        <begin position="49"/>
        <end position="60"/>
    </location>
</feature>
<feature type="compositionally biased region" description="Low complexity" evidence="2">
    <location>
        <begin position="369"/>
        <end position="381"/>
    </location>
</feature>
<feature type="site" description="Cleavage; by Ty2 protease" evidence="1">
    <location>
        <begin position="397"/>
        <end position="398"/>
    </location>
</feature>
<dbReference type="EMBL" id="D50617">
    <property type="protein sequence ID" value="BAA09236.1"/>
    <property type="molecule type" value="Genomic_DNA"/>
</dbReference>
<dbReference type="EMBL" id="BK006940">
    <property type="protein sequence ID" value="DAA12438.1"/>
    <property type="molecule type" value="Genomic_DNA"/>
</dbReference>
<dbReference type="PIR" id="S56252">
    <property type="entry name" value="S56252"/>
</dbReference>
<dbReference type="RefSeq" id="NP_058157.1">
    <molecule id="P0CX61-1"/>
    <property type="nucleotide sequence ID" value="NM_001184430.1"/>
</dbReference>
<dbReference type="RefSeq" id="NP_058164.1">
    <molecule id="P0CX61-1"/>
    <property type="nucleotide sequence ID" value="NM_001184401.1"/>
</dbReference>
<dbReference type="SMR" id="P0CX61"/>
<dbReference type="BioGRID" id="31145">
    <property type="interactions" value="1"/>
</dbReference>
<dbReference type="BioGRID" id="33409">
    <property type="interactions" value="1"/>
</dbReference>
<dbReference type="FunCoup" id="P0CX61">
    <property type="interactions" value="58"/>
</dbReference>
<dbReference type="PaxDb" id="4932-YFL002W-B"/>
<dbReference type="PeptideAtlas" id="P0CX61"/>
<dbReference type="GeneID" id="850547"/>
<dbReference type="KEGG" id="sce:YFL002W-B"/>
<dbReference type="KEGG" id="sce:YGR161W-A"/>
<dbReference type="AGR" id="SGD:S000007404"/>
<dbReference type="SGD" id="S000007404">
    <property type="gene designation" value="YFL002W-B"/>
</dbReference>
<dbReference type="VEuPathDB" id="FungiDB:YFL002W-B"/>
<dbReference type="VEuPathDB" id="FungiDB:YGR161W-A"/>
<dbReference type="eggNOG" id="KOG0017">
    <property type="taxonomic scope" value="Eukaryota"/>
</dbReference>
<dbReference type="HOGENOM" id="CLU_045291_1_0_1"/>
<dbReference type="InParanoid" id="P0CX61"/>
<dbReference type="OrthoDB" id="4046078at2759"/>
<dbReference type="Proteomes" id="UP000002311">
    <property type="component" value="Chromosome VI"/>
</dbReference>
<dbReference type="RNAct" id="P0CX61">
    <property type="molecule type" value="protein"/>
</dbReference>
<dbReference type="GO" id="GO:0005737">
    <property type="term" value="C:cytoplasm"/>
    <property type="evidence" value="ECO:0007669"/>
    <property type="project" value="UniProtKB-SubCell"/>
</dbReference>
<dbReference type="GO" id="GO:0003723">
    <property type="term" value="F:RNA binding"/>
    <property type="evidence" value="ECO:0007669"/>
    <property type="project" value="UniProtKB-KW"/>
</dbReference>
<dbReference type="GO" id="GO:0075523">
    <property type="term" value="P:viral translational frameshifting"/>
    <property type="evidence" value="ECO:0007669"/>
    <property type="project" value="UniProtKB-KW"/>
</dbReference>
<dbReference type="InterPro" id="IPR015820">
    <property type="entry name" value="TYA"/>
</dbReference>
<dbReference type="Pfam" id="PF01021">
    <property type="entry name" value="TYA"/>
    <property type="match status" value="1"/>
</dbReference>
<gene>
    <name type="primary">TY2A-F</name>
    <name type="synonym">YFLWTy2-1 GAG</name>
    <name type="ordered locus">YFL002W-B</name>
    <name type="ORF">F006</name>
</gene>
<reference key="1">
    <citation type="journal article" date="1995" name="Nat. Genet.">
        <title>Analysis of the nucleotide sequence of chromosome VI from Saccharomyces cerevisiae.</title>
        <authorList>
            <person name="Murakami Y."/>
            <person name="Naitou M."/>
            <person name="Hagiwara H."/>
            <person name="Shibata T."/>
            <person name="Ozawa M."/>
            <person name="Sasanuma S."/>
            <person name="Sasanuma M."/>
            <person name="Tsuchiya Y."/>
            <person name="Soeda E."/>
            <person name="Yokoyama K."/>
            <person name="Yamazaki M."/>
            <person name="Tashiro H."/>
            <person name="Eki T."/>
        </authorList>
    </citation>
    <scope>NUCLEOTIDE SEQUENCE [LARGE SCALE GENOMIC DNA]</scope>
    <source>
        <strain>ATCC 204508 / S288c</strain>
    </source>
</reference>
<reference key="2">
    <citation type="journal article" date="2014" name="G3 (Bethesda)">
        <title>The reference genome sequence of Saccharomyces cerevisiae: Then and now.</title>
        <authorList>
            <person name="Engel S.R."/>
            <person name="Dietrich F.S."/>
            <person name="Fisk D.G."/>
            <person name="Binkley G."/>
            <person name="Balakrishnan R."/>
            <person name="Costanzo M.C."/>
            <person name="Dwight S.S."/>
            <person name="Hitz B.C."/>
            <person name="Karra K."/>
            <person name="Nash R.S."/>
            <person name="Weng S."/>
            <person name="Wong E.D."/>
            <person name="Lloyd P."/>
            <person name="Skrzypek M.S."/>
            <person name="Miyasato S.R."/>
            <person name="Simison M."/>
            <person name="Cherry J.M."/>
        </authorList>
    </citation>
    <scope>GENOME REANNOTATION</scope>
    <source>
        <strain>ATCC 204508 / S288c</strain>
    </source>
</reference>
<reference key="3">
    <citation type="journal article" date="1998" name="Genome Res.">
        <title>Transposable elements and genome organization: a comprehensive survey of retrotransposons revealed by the complete Saccharomyces cerevisiae genome sequence.</title>
        <authorList>
            <person name="Kim J.M."/>
            <person name="Vanguri S."/>
            <person name="Boeke J.D."/>
            <person name="Gabriel A."/>
            <person name="Voytas D.F."/>
        </authorList>
    </citation>
    <scope>NOMENCLATURE</scope>
</reference>
<reference key="4">
    <citation type="journal article" date="2005" name="Cytogenet. Genome Res.">
        <title>Happy together: the life and times of Ty retrotransposons and their hosts.</title>
        <authorList>
            <person name="Lesage P."/>
            <person name="Todeschini A.L."/>
        </authorList>
    </citation>
    <scope>REVIEW</scope>
</reference>
<name>YF21A_YEAST</name>
<evidence type="ECO:0000250" key="1"/>
<evidence type="ECO:0000256" key="2">
    <source>
        <dbReference type="SAM" id="MobiDB-lite"/>
    </source>
</evidence>
<proteinExistence type="inferred from homology"/>
<organism>
    <name type="scientific">Saccharomyces cerevisiae (strain ATCC 204508 / S288c)</name>
    <name type="common">Baker's yeast</name>
    <dbReference type="NCBI Taxonomy" id="559292"/>
    <lineage>
        <taxon>Eukaryota</taxon>
        <taxon>Fungi</taxon>
        <taxon>Dikarya</taxon>
        <taxon>Ascomycota</taxon>
        <taxon>Saccharomycotina</taxon>
        <taxon>Saccharomycetes</taxon>
        <taxon>Saccharomycetales</taxon>
        <taxon>Saccharomycetaceae</taxon>
        <taxon>Saccharomyces</taxon>
    </lineage>
</organism>
<accession>P0CX61</accession>
<accession>D6VTM8</accession>
<accession>Q99195</accession>
<keyword id="KW-0963">Cytoplasm</keyword>
<keyword id="KW-1185">Reference proteome</keyword>
<keyword id="KW-0688">Ribosomal frameshifting</keyword>
<keyword id="KW-0694">RNA-binding</keyword>
<keyword id="KW-0814">Transposable element</keyword>